<keyword id="KW-0131">Cell cycle</keyword>
<keyword id="KW-0132">Cell division</keyword>
<keyword id="KW-0717">Septation</keyword>
<gene>
    <name evidence="1" type="primary">minC</name>
    <name type="ordered locus">BUsg_318</name>
</gene>
<dbReference type="EMBL" id="AE013218">
    <property type="protein sequence ID" value="AAM67872.1"/>
    <property type="molecule type" value="Genomic_DNA"/>
</dbReference>
<dbReference type="RefSeq" id="WP_011053839.1">
    <property type="nucleotide sequence ID" value="NC_004061.1"/>
</dbReference>
<dbReference type="SMR" id="Q8K9L6"/>
<dbReference type="STRING" id="198804.BUsg_318"/>
<dbReference type="GeneID" id="93003787"/>
<dbReference type="KEGG" id="bas:BUsg_318"/>
<dbReference type="eggNOG" id="COG0850">
    <property type="taxonomic scope" value="Bacteria"/>
</dbReference>
<dbReference type="HOGENOM" id="CLU_067812_0_1_6"/>
<dbReference type="Proteomes" id="UP000000416">
    <property type="component" value="Chromosome"/>
</dbReference>
<dbReference type="GO" id="GO:0000902">
    <property type="term" value="P:cell morphogenesis"/>
    <property type="evidence" value="ECO:0007669"/>
    <property type="project" value="InterPro"/>
</dbReference>
<dbReference type="GO" id="GO:0000917">
    <property type="term" value="P:division septum assembly"/>
    <property type="evidence" value="ECO:0007669"/>
    <property type="project" value="UniProtKB-KW"/>
</dbReference>
<dbReference type="GO" id="GO:0051302">
    <property type="term" value="P:regulation of cell division"/>
    <property type="evidence" value="ECO:0007669"/>
    <property type="project" value="InterPro"/>
</dbReference>
<dbReference type="GO" id="GO:1901891">
    <property type="term" value="P:regulation of cell septum assembly"/>
    <property type="evidence" value="ECO:0007669"/>
    <property type="project" value="InterPro"/>
</dbReference>
<dbReference type="Gene3D" id="2.160.20.70">
    <property type="match status" value="1"/>
</dbReference>
<dbReference type="Gene3D" id="3.30.70.260">
    <property type="match status" value="1"/>
</dbReference>
<dbReference type="HAMAP" id="MF_00267">
    <property type="entry name" value="MinC"/>
    <property type="match status" value="1"/>
</dbReference>
<dbReference type="InterPro" id="IPR016098">
    <property type="entry name" value="CAP/MinC_C"/>
</dbReference>
<dbReference type="InterPro" id="IPR013033">
    <property type="entry name" value="MinC"/>
</dbReference>
<dbReference type="InterPro" id="IPR036145">
    <property type="entry name" value="MinC_C_sf"/>
</dbReference>
<dbReference type="InterPro" id="IPR007874">
    <property type="entry name" value="MinC_N"/>
</dbReference>
<dbReference type="InterPro" id="IPR005526">
    <property type="entry name" value="Septum_form_inhib_MinC_C"/>
</dbReference>
<dbReference type="NCBIfam" id="TIGR01222">
    <property type="entry name" value="minC"/>
    <property type="match status" value="1"/>
</dbReference>
<dbReference type="PANTHER" id="PTHR34108">
    <property type="entry name" value="SEPTUM SITE-DETERMINING PROTEIN MINC"/>
    <property type="match status" value="1"/>
</dbReference>
<dbReference type="PANTHER" id="PTHR34108:SF1">
    <property type="entry name" value="SEPTUM SITE-DETERMINING PROTEIN MINC"/>
    <property type="match status" value="1"/>
</dbReference>
<dbReference type="Pfam" id="PF03775">
    <property type="entry name" value="MinC_C"/>
    <property type="match status" value="1"/>
</dbReference>
<dbReference type="Pfam" id="PF05209">
    <property type="entry name" value="MinC_N"/>
    <property type="match status" value="1"/>
</dbReference>
<dbReference type="SUPFAM" id="SSF63848">
    <property type="entry name" value="Cell-division inhibitor MinC, C-terminal domain"/>
    <property type="match status" value="1"/>
</dbReference>
<organism>
    <name type="scientific">Buchnera aphidicola subsp. Schizaphis graminum (strain Sg)</name>
    <dbReference type="NCBI Taxonomy" id="198804"/>
    <lineage>
        <taxon>Bacteria</taxon>
        <taxon>Pseudomonadati</taxon>
        <taxon>Pseudomonadota</taxon>
        <taxon>Gammaproteobacteria</taxon>
        <taxon>Enterobacterales</taxon>
        <taxon>Erwiniaceae</taxon>
        <taxon>Buchnera</taxon>
    </lineage>
</organism>
<name>MINC_BUCAP</name>
<comment type="function">
    <text evidence="1">Cell division inhibitor that blocks the formation of polar Z ring septums. Rapidly oscillates between the poles of the cell to destabilize FtsZ filaments that have formed before they mature into polar Z rings. Prevents FtsZ polymerization.</text>
</comment>
<comment type="subunit">
    <text evidence="1">Interacts with MinD and FtsZ.</text>
</comment>
<comment type="similarity">
    <text evidence="1">Belongs to the MinC family.</text>
</comment>
<reference key="1">
    <citation type="journal article" date="2002" name="Science">
        <title>50 million years of genomic stasis in endosymbiotic bacteria.</title>
        <authorList>
            <person name="Tamas I."/>
            <person name="Klasson L."/>
            <person name="Canbaeck B."/>
            <person name="Naeslund A.K."/>
            <person name="Eriksson A.-S."/>
            <person name="Wernegreen J.J."/>
            <person name="Sandstroem J.P."/>
            <person name="Moran N.A."/>
            <person name="Andersson S.G.E."/>
        </authorList>
    </citation>
    <scope>NUCLEOTIDE SEQUENCE [LARGE SCALE GENOMIC DNA]</scope>
    <source>
        <strain>Sg</strain>
    </source>
</reference>
<sequence>MQKMPIELKGSNFTFLVLYLNTNNVDLISKSLYKKIQEYPQFFKNVPVIVNVSNLLNQVNWKKIQEIIIEYGFYIVGVSGCKDNYFKKIIVESGLPVLLESNTTNTNKDLRSFYHTSTLKKTKNEQRLRVKKIEKTHIINTPVRSGQKIYAKYSDLVVINNVSAGAELVADGNIHVYGSVRGRVLAGANGDITSKIFCTTLFAELISVSGQYWLSDQIPSHFIGKSAQIYLKNKFLTINSLS</sequence>
<feature type="chain" id="PRO_0000189025" description="Probable septum site-determining protein MinC">
    <location>
        <begin position="1"/>
        <end position="242"/>
    </location>
</feature>
<evidence type="ECO:0000255" key="1">
    <source>
        <dbReference type="HAMAP-Rule" id="MF_00267"/>
    </source>
</evidence>
<proteinExistence type="inferred from homology"/>
<accession>Q8K9L6</accession>
<protein>
    <recommendedName>
        <fullName evidence="1">Probable septum site-determining protein MinC</fullName>
    </recommendedName>
</protein>